<dbReference type="EMBL" id="JF411744">
    <property type="protein sequence ID" value="AAC96561.1"/>
    <property type="molecule type" value="Genomic_DNA"/>
</dbReference>
<dbReference type="PIR" id="T17683">
    <property type="entry name" value="T17683"/>
</dbReference>
<dbReference type="RefSeq" id="NP_048540.1">
    <property type="nucleotide sequence ID" value="NC_000852.5"/>
</dbReference>
<dbReference type="SMR" id="Q84513"/>
<dbReference type="GeneID" id="918249"/>
<dbReference type="KEGG" id="vg:918249"/>
<dbReference type="OrthoDB" id="7519at10239"/>
<dbReference type="Proteomes" id="UP000000862">
    <property type="component" value="Genome"/>
</dbReference>
<dbReference type="GO" id="GO:0003677">
    <property type="term" value="F:DNA binding"/>
    <property type="evidence" value="ECO:0007669"/>
    <property type="project" value="UniProtKB-KW"/>
</dbReference>
<dbReference type="GO" id="GO:0030337">
    <property type="term" value="F:DNA polymerase processivity factor activity"/>
    <property type="evidence" value="ECO:0007669"/>
    <property type="project" value="InterPro"/>
</dbReference>
<dbReference type="GO" id="GO:0006272">
    <property type="term" value="P:leading strand elongation"/>
    <property type="evidence" value="ECO:0007669"/>
    <property type="project" value="TreeGrafter"/>
</dbReference>
<dbReference type="GO" id="GO:0006298">
    <property type="term" value="P:mismatch repair"/>
    <property type="evidence" value="ECO:0007669"/>
    <property type="project" value="TreeGrafter"/>
</dbReference>
<dbReference type="GO" id="GO:0006275">
    <property type="term" value="P:regulation of DNA replication"/>
    <property type="evidence" value="ECO:0007669"/>
    <property type="project" value="InterPro"/>
</dbReference>
<dbReference type="GO" id="GO:0019985">
    <property type="term" value="P:translesion synthesis"/>
    <property type="evidence" value="ECO:0007669"/>
    <property type="project" value="TreeGrafter"/>
</dbReference>
<dbReference type="CDD" id="cd00577">
    <property type="entry name" value="PCNA"/>
    <property type="match status" value="1"/>
</dbReference>
<dbReference type="Gene3D" id="3.70.10.10">
    <property type="match status" value="1"/>
</dbReference>
<dbReference type="HAMAP" id="MF_00317">
    <property type="entry name" value="DNApol_clamp_arch"/>
    <property type="match status" value="1"/>
</dbReference>
<dbReference type="InterPro" id="IPR046938">
    <property type="entry name" value="DNA_clamp_sf"/>
</dbReference>
<dbReference type="InterPro" id="IPR000730">
    <property type="entry name" value="Pr_cel_nuc_antig"/>
</dbReference>
<dbReference type="InterPro" id="IPR022649">
    <property type="entry name" value="Pr_cel_nuc_antig_C"/>
</dbReference>
<dbReference type="InterPro" id="IPR022659">
    <property type="entry name" value="Pr_cel_nuc_antig_CS"/>
</dbReference>
<dbReference type="InterPro" id="IPR022648">
    <property type="entry name" value="Pr_cel_nuc_antig_N"/>
</dbReference>
<dbReference type="NCBIfam" id="TIGR00590">
    <property type="entry name" value="pcna"/>
    <property type="match status" value="1"/>
</dbReference>
<dbReference type="PANTHER" id="PTHR11352">
    <property type="entry name" value="PROLIFERATING CELL NUCLEAR ANTIGEN"/>
    <property type="match status" value="1"/>
</dbReference>
<dbReference type="PANTHER" id="PTHR11352:SF0">
    <property type="entry name" value="PROLIFERATING CELL NUCLEAR ANTIGEN"/>
    <property type="match status" value="1"/>
</dbReference>
<dbReference type="Pfam" id="PF02747">
    <property type="entry name" value="PCNA_C"/>
    <property type="match status" value="1"/>
</dbReference>
<dbReference type="Pfam" id="PF00705">
    <property type="entry name" value="PCNA_N"/>
    <property type="match status" value="1"/>
</dbReference>
<dbReference type="PRINTS" id="PR00339">
    <property type="entry name" value="PCNACYCLIN"/>
</dbReference>
<dbReference type="SUPFAM" id="SSF55979">
    <property type="entry name" value="DNA clamp"/>
    <property type="match status" value="2"/>
</dbReference>
<dbReference type="PROSITE" id="PS01251">
    <property type="entry name" value="PCNA_1"/>
    <property type="match status" value="1"/>
</dbReference>
<dbReference type="PROSITE" id="PS00293">
    <property type="entry name" value="PCNA_2"/>
    <property type="match status" value="1"/>
</dbReference>
<evidence type="ECO:0000250" key="1"/>
<evidence type="ECO:0000255" key="2"/>
<evidence type="ECO:0000305" key="3"/>
<accession>Q84513</accession>
<organismHost>
    <name type="scientific">Chlorella</name>
    <dbReference type="NCBI Taxonomy" id="3071"/>
</organismHost>
<organism>
    <name type="scientific">Paramecium bursaria Chlorella virus 1</name>
    <name type="common">PBCV-1</name>
    <dbReference type="NCBI Taxonomy" id="10506"/>
    <lineage>
        <taxon>Viruses</taxon>
        <taxon>Varidnaviria</taxon>
        <taxon>Bamfordvirae</taxon>
        <taxon>Nucleocytoviricota</taxon>
        <taxon>Megaviricetes</taxon>
        <taxon>Algavirales</taxon>
        <taxon>Phycodnaviridae</taxon>
        <taxon>Chlorovirus</taxon>
    </lineage>
</organism>
<gene>
    <name type="ordered locus">A193L</name>
</gene>
<protein>
    <recommendedName>
        <fullName>Probable DNA polymerase sliding clamp 1</fullName>
    </recommendedName>
    <alternativeName>
        <fullName>Proliferating cell nuclear antigen homolog 1</fullName>
        <shortName>PCNA 1</shortName>
    </alternativeName>
</protein>
<sequence length="262" mass="29627">MDDDNVLFHIRTLQGNVIKSLFDCLKEILHDVMLSFGPTGIRISALDGAKVSLVHLKLDSESFEEYKCEHTYELGVNVLNMFKLLRSAGSHDSILFRYLKNDPHMIELTIQNFEKNSLTKFNMKLIEIDSVEIEVGDIEFDTIIVMPANYFQRICRDMSDITDHLVIVKKGDEVSFNSDYTCVTDFASQKTIIGDSDNGQITCNNDTDYESKFSLKYLTSFCKASGMSSAVEIYLKESYPLILKYTVGSMGALKFVIAPILS</sequence>
<keyword id="KW-0235">DNA replication</keyword>
<keyword id="KW-0238">DNA-binding</keyword>
<keyword id="KW-1185">Reference proteome</keyword>
<reference key="1">
    <citation type="journal article" date="1995" name="Virology">
        <title>Analysis of 45 kb of DNA located at the left end of the chlorella virus PBCV-1 genome.</title>
        <authorList>
            <person name="Lu Z."/>
            <person name="Li Y."/>
            <person name="Zhang Y."/>
            <person name="Kutish G.F."/>
            <person name="Rock D.L."/>
            <person name="van Etten J.L."/>
        </authorList>
    </citation>
    <scope>NUCLEOTIDE SEQUENCE [LARGE SCALE GENOMIC DNA]</scope>
</reference>
<feature type="chain" id="PRO_0000149226" description="Probable DNA polymerase sliding clamp 1">
    <location>
        <begin position="1"/>
        <end position="262"/>
    </location>
</feature>
<feature type="DNA-binding region" evidence="2">
    <location>
        <begin position="67"/>
        <end position="86"/>
    </location>
</feature>
<name>PCNA1_PBCV1</name>
<comment type="function">
    <text evidence="1">Sliding clamp subunit. Responsible for tethering the catalytic subunit of DNA polymerase to DNA during high-speed replication (By similarity).</text>
</comment>
<comment type="similarity">
    <text evidence="3">Belongs to the PCNA family.</text>
</comment>
<proteinExistence type="inferred from homology"/>